<evidence type="ECO:0000250" key="1"/>
<evidence type="ECO:0000269" key="2">
    <source>
    </source>
</evidence>
<evidence type="ECO:0000305" key="3"/>
<dbReference type="EC" id="3.5.1.4"/>
<dbReference type="EMBL" id="CU329672">
    <property type="protein sequence ID" value="CAA19111.1"/>
    <property type="molecule type" value="Genomic_DNA"/>
</dbReference>
<dbReference type="PIR" id="T41382">
    <property type="entry name" value="T41382"/>
</dbReference>
<dbReference type="SMR" id="O59805"/>
<dbReference type="BioGRID" id="276041">
    <property type="interactions" value="17"/>
</dbReference>
<dbReference type="FunCoup" id="O59805">
    <property type="interactions" value="39"/>
</dbReference>
<dbReference type="STRING" id="284812.O59805"/>
<dbReference type="PaxDb" id="4896-SPCC550.07.1"/>
<dbReference type="EnsemblFungi" id="SPCC550.07.1">
    <property type="protein sequence ID" value="SPCC550.07.1:pep"/>
    <property type="gene ID" value="SPCC550.07"/>
</dbReference>
<dbReference type="KEGG" id="spo:2539478"/>
<dbReference type="PomBase" id="SPCC550.07"/>
<dbReference type="VEuPathDB" id="FungiDB:SPCC550.07"/>
<dbReference type="eggNOG" id="KOG1212">
    <property type="taxonomic scope" value="Eukaryota"/>
</dbReference>
<dbReference type="HOGENOM" id="CLU_009600_9_2_1"/>
<dbReference type="InParanoid" id="O59805"/>
<dbReference type="OMA" id="LTEWIWR"/>
<dbReference type="PhylomeDB" id="O59805"/>
<dbReference type="PRO" id="PR:O59805"/>
<dbReference type="Proteomes" id="UP000002485">
    <property type="component" value="Chromosome III"/>
</dbReference>
<dbReference type="GO" id="GO:0005737">
    <property type="term" value="C:cytoplasm"/>
    <property type="evidence" value="ECO:0007005"/>
    <property type="project" value="PomBase"/>
</dbReference>
<dbReference type="GO" id="GO:0005829">
    <property type="term" value="C:cytosol"/>
    <property type="evidence" value="ECO:0007005"/>
    <property type="project" value="PomBase"/>
</dbReference>
<dbReference type="GO" id="GO:0005634">
    <property type="term" value="C:nucleus"/>
    <property type="evidence" value="ECO:0007005"/>
    <property type="project" value="PomBase"/>
</dbReference>
<dbReference type="GO" id="GO:0004040">
    <property type="term" value="F:amidase activity"/>
    <property type="evidence" value="ECO:0007669"/>
    <property type="project" value="UniProtKB-EC"/>
</dbReference>
<dbReference type="GO" id="GO:0017064">
    <property type="term" value="F:fatty acid amide hydrolase activity"/>
    <property type="evidence" value="ECO:0000250"/>
    <property type="project" value="PomBase"/>
</dbReference>
<dbReference type="GO" id="GO:0043605">
    <property type="term" value="P:amide catabolic process"/>
    <property type="evidence" value="ECO:0000318"/>
    <property type="project" value="GO_Central"/>
</dbReference>
<dbReference type="GO" id="GO:0009062">
    <property type="term" value="P:fatty acid catabolic process"/>
    <property type="evidence" value="ECO:0000250"/>
    <property type="project" value="PomBase"/>
</dbReference>
<dbReference type="FunFam" id="3.90.1300.10:FF:000003">
    <property type="entry name" value="Amidase signature enzyme"/>
    <property type="match status" value="1"/>
</dbReference>
<dbReference type="Gene3D" id="3.90.1300.10">
    <property type="entry name" value="Amidase signature (AS) domain"/>
    <property type="match status" value="1"/>
</dbReference>
<dbReference type="InterPro" id="IPR020556">
    <property type="entry name" value="Amidase_CS"/>
</dbReference>
<dbReference type="InterPro" id="IPR023631">
    <property type="entry name" value="Amidase_dom"/>
</dbReference>
<dbReference type="InterPro" id="IPR036928">
    <property type="entry name" value="AS_sf"/>
</dbReference>
<dbReference type="PANTHER" id="PTHR46072:SF4">
    <property type="entry name" value="AMIDASE C550.07-RELATED"/>
    <property type="match status" value="1"/>
</dbReference>
<dbReference type="PANTHER" id="PTHR46072">
    <property type="entry name" value="AMIDASE-RELATED-RELATED"/>
    <property type="match status" value="1"/>
</dbReference>
<dbReference type="Pfam" id="PF01425">
    <property type="entry name" value="Amidase"/>
    <property type="match status" value="1"/>
</dbReference>
<dbReference type="PIRSF" id="PIRSF001221">
    <property type="entry name" value="Amidase_fungi"/>
    <property type="match status" value="1"/>
</dbReference>
<dbReference type="SUPFAM" id="SSF75304">
    <property type="entry name" value="Amidase signature (AS) enzymes"/>
    <property type="match status" value="1"/>
</dbReference>
<dbReference type="PROSITE" id="PS00571">
    <property type="entry name" value="AMIDASES"/>
    <property type="match status" value="1"/>
</dbReference>
<accession>O59805</accession>
<feature type="chain" id="PRO_0000316202" description="Putative amidase C550.07">
    <location>
        <begin position="1"/>
        <end position="533"/>
    </location>
</feature>
<feature type="active site" description="Charge relay system" evidence="1">
    <location>
        <position position="132"/>
    </location>
</feature>
<feature type="active site" description="Charge relay system" evidence="1">
    <location>
        <position position="207"/>
    </location>
</feature>
<feature type="active site" description="Acyl-ester intermediate" evidence="1">
    <location>
        <position position="231"/>
    </location>
</feature>
<keyword id="KW-0963">Cytoplasm</keyword>
<keyword id="KW-0378">Hydrolase</keyword>
<keyword id="KW-0539">Nucleus</keyword>
<keyword id="KW-1185">Reference proteome</keyword>
<proteinExistence type="inferred from homology"/>
<protein>
    <recommendedName>
        <fullName>Putative amidase C550.07</fullName>
        <ecNumber>3.5.1.4</ecNumber>
    </recommendedName>
</protein>
<reference key="1">
    <citation type="journal article" date="2002" name="Nature">
        <title>The genome sequence of Schizosaccharomyces pombe.</title>
        <authorList>
            <person name="Wood V."/>
            <person name="Gwilliam R."/>
            <person name="Rajandream M.A."/>
            <person name="Lyne M.H."/>
            <person name="Lyne R."/>
            <person name="Stewart A."/>
            <person name="Sgouros J.G."/>
            <person name="Peat N."/>
            <person name="Hayles J."/>
            <person name="Baker S.G."/>
            <person name="Basham D."/>
            <person name="Bowman S."/>
            <person name="Brooks K."/>
            <person name="Brown D."/>
            <person name="Brown S."/>
            <person name="Chillingworth T."/>
            <person name="Churcher C.M."/>
            <person name="Collins M."/>
            <person name="Connor R."/>
            <person name="Cronin A."/>
            <person name="Davis P."/>
            <person name="Feltwell T."/>
            <person name="Fraser A."/>
            <person name="Gentles S."/>
            <person name="Goble A."/>
            <person name="Hamlin N."/>
            <person name="Harris D.E."/>
            <person name="Hidalgo J."/>
            <person name="Hodgson G."/>
            <person name="Holroyd S."/>
            <person name="Hornsby T."/>
            <person name="Howarth S."/>
            <person name="Huckle E.J."/>
            <person name="Hunt S."/>
            <person name="Jagels K."/>
            <person name="James K.D."/>
            <person name="Jones L."/>
            <person name="Jones M."/>
            <person name="Leather S."/>
            <person name="McDonald S."/>
            <person name="McLean J."/>
            <person name="Mooney P."/>
            <person name="Moule S."/>
            <person name="Mungall K.L."/>
            <person name="Murphy L.D."/>
            <person name="Niblett D."/>
            <person name="Odell C."/>
            <person name="Oliver K."/>
            <person name="O'Neil S."/>
            <person name="Pearson D."/>
            <person name="Quail M.A."/>
            <person name="Rabbinowitsch E."/>
            <person name="Rutherford K.M."/>
            <person name="Rutter S."/>
            <person name="Saunders D."/>
            <person name="Seeger K."/>
            <person name="Sharp S."/>
            <person name="Skelton J."/>
            <person name="Simmonds M.N."/>
            <person name="Squares R."/>
            <person name="Squares S."/>
            <person name="Stevens K."/>
            <person name="Taylor K."/>
            <person name="Taylor R.G."/>
            <person name="Tivey A."/>
            <person name="Walsh S.V."/>
            <person name="Warren T."/>
            <person name="Whitehead S."/>
            <person name="Woodward J.R."/>
            <person name="Volckaert G."/>
            <person name="Aert R."/>
            <person name="Robben J."/>
            <person name="Grymonprez B."/>
            <person name="Weltjens I."/>
            <person name="Vanstreels E."/>
            <person name="Rieger M."/>
            <person name="Schaefer M."/>
            <person name="Mueller-Auer S."/>
            <person name="Gabel C."/>
            <person name="Fuchs M."/>
            <person name="Duesterhoeft A."/>
            <person name="Fritzc C."/>
            <person name="Holzer E."/>
            <person name="Moestl D."/>
            <person name="Hilbert H."/>
            <person name="Borzym K."/>
            <person name="Langer I."/>
            <person name="Beck A."/>
            <person name="Lehrach H."/>
            <person name="Reinhardt R."/>
            <person name="Pohl T.M."/>
            <person name="Eger P."/>
            <person name="Zimmermann W."/>
            <person name="Wedler H."/>
            <person name="Wambutt R."/>
            <person name="Purnelle B."/>
            <person name="Goffeau A."/>
            <person name="Cadieu E."/>
            <person name="Dreano S."/>
            <person name="Gloux S."/>
            <person name="Lelaure V."/>
            <person name="Mottier S."/>
            <person name="Galibert F."/>
            <person name="Aves S.J."/>
            <person name="Xiang Z."/>
            <person name="Hunt C."/>
            <person name="Moore K."/>
            <person name="Hurst S.M."/>
            <person name="Lucas M."/>
            <person name="Rochet M."/>
            <person name="Gaillardin C."/>
            <person name="Tallada V.A."/>
            <person name="Garzon A."/>
            <person name="Thode G."/>
            <person name="Daga R.R."/>
            <person name="Cruzado L."/>
            <person name="Jimenez J."/>
            <person name="Sanchez M."/>
            <person name="del Rey F."/>
            <person name="Benito J."/>
            <person name="Dominguez A."/>
            <person name="Revuelta J.L."/>
            <person name="Moreno S."/>
            <person name="Armstrong J."/>
            <person name="Forsburg S.L."/>
            <person name="Cerutti L."/>
            <person name="Lowe T."/>
            <person name="McCombie W.R."/>
            <person name="Paulsen I."/>
            <person name="Potashkin J."/>
            <person name="Shpakovski G.V."/>
            <person name="Ussery D."/>
            <person name="Barrell B.G."/>
            <person name="Nurse P."/>
        </authorList>
    </citation>
    <scope>NUCLEOTIDE SEQUENCE [LARGE SCALE GENOMIC DNA]</scope>
    <source>
        <strain>972 / ATCC 24843</strain>
    </source>
</reference>
<reference key="2">
    <citation type="journal article" date="2006" name="Nat. Biotechnol.">
        <title>ORFeome cloning and global analysis of protein localization in the fission yeast Schizosaccharomyces pombe.</title>
        <authorList>
            <person name="Matsuyama A."/>
            <person name="Arai R."/>
            <person name="Yashiroda Y."/>
            <person name="Shirai A."/>
            <person name="Kamata A."/>
            <person name="Sekido S."/>
            <person name="Kobayashi Y."/>
            <person name="Hashimoto A."/>
            <person name="Hamamoto M."/>
            <person name="Hiraoka Y."/>
            <person name="Horinouchi S."/>
            <person name="Yoshida M."/>
        </authorList>
    </citation>
    <scope>SUBCELLULAR LOCATION [LARGE SCALE ANALYSIS]</scope>
</reference>
<comment type="catalytic activity">
    <reaction>
        <text>a monocarboxylic acid amide + H2O = a monocarboxylate + NH4(+)</text>
        <dbReference type="Rhea" id="RHEA:12020"/>
        <dbReference type="ChEBI" id="CHEBI:15377"/>
        <dbReference type="ChEBI" id="CHEBI:28938"/>
        <dbReference type="ChEBI" id="CHEBI:35757"/>
        <dbReference type="ChEBI" id="CHEBI:83628"/>
        <dbReference type="EC" id="3.5.1.4"/>
    </reaction>
</comment>
<comment type="subcellular location">
    <subcellularLocation>
        <location evidence="2">Cytoplasm</location>
    </subcellularLocation>
    <subcellularLocation>
        <location evidence="2">Nucleus</location>
    </subcellularLocation>
</comment>
<comment type="similarity">
    <text evidence="3">Belongs to the amidase family.</text>
</comment>
<organism>
    <name type="scientific">Schizosaccharomyces pombe (strain 972 / ATCC 24843)</name>
    <name type="common">Fission yeast</name>
    <dbReference type="NCBI Taxonomy" id="284812"/>
    <lineage>
        <taxon>Eukaryota</taxon>
        <taxon>Fungi</taxon>
        <taxon>Dikarya</taxon>
        <taxon>Ascomycota</taxon>
        <taxon>Taphrinomycotina</taxon>
        <taxon>Schizosaccharomycetes</taxon>
        <taxon>Schizosaccharomycetales</taxon>
        <taxon>Schizosaccharomycetaceae</taxon>
        <taxon>Schizosaccharomyces</taxon>
    </lineage>
</organism>
<sequence length="533" mass="58705">MTIDWRQIAAKYCAHRDGSIPEPFKIKTLPKDTVLNVTKIPSECGLLTPKEIELTEKYDATALAEMIKDRKVTSVELVTAFCKRAAIAQQLVNCVNELFYEEALARAAELDEYYAKTGSLVGPLHGVPVSVKEHISIKNHTATASFLAKANIIAEKDSDLVATVRKAGAVFYCRTPQPQAIMHLETSSNLTGVTVNPFNRKLTPGGSSGGEGALLGIKASVLGIGSDIGGSIRSPAANNGLFGLRPSTLRLSRKGCQGAVSGQETILGVVGPLGRSVRDMNLFMKACIDSQPWLDDASLLPMPWRSVAPPKTLKVGIMRSDNVVNPQPPVARAMQMAIDQLSKNPDFDLVDVEPLDHKYSWDLISEMYWLDGGKVYYDLFNKVGEPILPLTEWIMHQPNVKPHDITAVWKLTAARDEYRNRYLKHLQAYGVDVLLTPVGPSPAPKLGEAKYWTYTSVWNLLDLPAVVFPVTTVDPKLDVKDESYIPMNEQDAANYETYSPEDYLDAPVSLQLVGKRWQDEELLAALDKIVSML</sequence>
<gene>
    <name type="ORF">SPCC550.07</name>
</gene>
<name>YJV7_SCHPO</name>